<protein>
    <recommendedName>
        <fullName evidence="1">Large ribosomal subunit protein uL10</fullName>
    </recommendedName>
    <alternativeName>
        <fullName evidence="2">50S ribosomal protein L10</fullName>
    </alternativeName>
</protein>
<reference key="1">
    <citation type="journal article" date="2004" name="Mol. Plant Microbe Interact.">
        <title>The genome sequence of the Gram-positive sugarcane pathogen Leifsonia xyli subsp. xyli.</title>
        <authorList>
            <person name="Monteiro-Vitorello C.B."/>
            <person name="Camargo L.E.A."/>
            <person name="Van Sluys M.A."/>
            <person name="Kitajima J.P."/>
            <person name="Truffi D."/>
            <person name="do Amaral A.M."/>
            <person name="Harakava R."/>
            <person name="de Oliveira J.C.F."/>
            <person name="Wood D."/>
            <person name="de Oliveira M.C."/>
            <person name="Miyaki C.Y."/>
            <person name="Takita M.A."/>
            <person name="da Silva A.C.R."/>
            <person name="Furlan L.R."/>
            <person name="Carraro D.M."/>
            <person name="Camarotte G."/>
            <person name="Almeida N.F. Jr."/>
            <person name="Carrer H."/>
            <person name="Coutinho L.L."/>
            <person name="El-Dorry H.A."/>
            <person name="Ferro M.I.T."/>
            <person name="Gagliardi P.R."/>
            <person name="Giglioti E."/>
            <person name="Goldman M.H.S."/>
            <person name="Goldman G.H."/>
            <person name="Kimura E.T."/>
            <person name="Ferro E.S."/>
            <person name="Kuramae E.E."/>
            <person name="Lemos E.G.M."/>
            <person name="Lemos M.V.F."/>
            <person name="Mauro S.M.Z."/>
            <person name="Machado M.A."/>
            <person name="Marino C.L."/>
            <person name="Menck C.F."/>
            <person name="Nunes L.R."/>
            <person name="Oliveira R.C."/>
            <person name="Pereira G.G."/>
            <person name="Siqueira W."/>
            <person name="de Souza A.A."/>
            <person name="Tsai S.M."/>
            <person name="Zanca A.S."/>
            <person name="Simpson A.J.G."/>
            <person name="Brumbley S.M."/>
            <person name="Setubal J.C."/>
        </authorList>
    </citation>
    <scope>NUCLEOTIDE SEQUENCE [LARGE SCALE GENOMIC DNA]</scope>
    <source>
        <strain>CTCB07</strain>
    </source>
</reference>
<comment type="function">
    <text evidence="1">Forms part of the ribosomal stalk, playing a central role in the interaction of the ribosome with GTP-bound translation factors.</text>
</comment>
<comment type="subunit">
    <text evidence="1">Part of the ribosomal stalk of the 50S ribosomal subunit. The N-terminus interacts with L11 and the large rRNA to form the base of the stalk. The C-terminus forms an elongated spine to which L12 dimers bind in a sequential fashion forming a multimeric L10(L12)X complex.</text>
</comment>
<comment type="similarity">
    <text evidence="1">Belongs to the universal ribosomal protein uL10 family.</text>
</comment>
<organism>
    <name type="scientific">Leifsonia xyli subsp. xyli (strain CTCB07)</name>
    <dbReference type="NCBI Taxonomy" id="281090"/>
    <lineage>
        <taxon>Bacteria</taxon>
        <taxon>Bacillati</taxon>
        <taxon>Actinomycetota</taxon>
        <taxon>Actinomycetes</taxon>
        <taxon>Micrococcales</taxon>
        <taxon>Microbacteriaceae</taxon>
        <taxon>Leifsonia</taxon>
    </lineage>
</organism>
<dbReference type="EMBL" id="AE016822">
    <property type="protein sequence ID" value="AAT88334.1"/>
    <property type="molecule type" value="Genomic_DNA"/>
</dbReference>
<dbReference type="RefSeq" id="WP_011185337.1">
    <property type="nucleotide sequence ID" value="NC_006087.1"/>
</dbReference>
<dbReference type="SMR" id="Q6AH11"/>
<dbReference type="STRING" id="281090.Lxx03150"/>
<dbReference type="KEGG" id="lxx:Lxx03150"/>
<dbReference type="eggNOG" id="COG0244">
    <property type="taxonomic scope" value="Bacteria"/>
</dbReference>
<dbReference type="HOGENOM" id="CLU_092227_1_0_11"/>
<dbReference type="Proteomes" id="UP000001306">
    <property type="component" value="Chromosome"/>
</dbReference>
<dbReference type="GO" id="GO:0015934">
    <property type="term" value="C:large ribosomal subunit"/>
    <property type="evidence" value="ECO:0007669"/>
    <property type="project" value="InterPro"/>
</dbReference>
<dbReference type="GO" id="GO:0070180">
    <property type="term" value="F:large ribosomal subunit rRNA binding"/>
    <property type="evidence" value="ECO:0007669"/>
    <property type="project" value="UniProtKB-UniRule"/>
</dbReference>
<dbReference type="GO" id="GO:0003735">
    <property type="term" value="F:structural constituent of ribosome"/>
    <property type="evidence" value="ECO:0007669"/>
    <property type="project" value="InterPro"/>
</dbReference>
<dbReference type="GO" id="GO:0006412">
    <property type="term" value="P:translation"/>
    <property type="evidence" value="ECO:0007669"/>
    <property type="project" value="UniProtKB-UniRule"/>
</dbReference>
<dbReference type="CDD" id="cd05797">
    <property type="entry name" value="Ribosomal_L10"/>
    <property type="match status" value="1"/>
</dbReference>
<dbReference type="Gene3D" id="3.30.70.1730">
    <property type="match status" value="1"/>
</dbReference>
<dbReference type="Gene3D" id="6.10.250.290">
    <property type="match status" value="1"/>
</dbReference>
<dbReference type="HAMAP" id="MF_00362">
    <property type="entry name" value="Ribosomal_uL10"/>
    <property type="match status" value="1"/>
</dbReference>
<dbReference type="InterPro" id="IPR001790">
    <property type="entry name" value="Ribosomal_uL10"/>
</dbReference>
<dbReference type="InterPro" id="IPR043141">
    <property type="entry name" value="Ribosomal_uL10-like_sf"/>
</dbReference>
<dbReference type="InterPro" id="IPR022973">
    <property type="entry name" value="Ribosomal_uL10_bac"/>
</dbReference>
<dbReference type="InterPro" id="IPR047865">
    <property type="entry name" value="Ribosomal_uL10_bac_type"/>
</dbReference>
<dbReference type="InterPro" id="IPR002363">
    <property type="entry name" value="Ribosomal_uL10_CS_bac"/>
</dbReference>
<dbReference type="NCBIfam" id="NF000955">
    <property type="entry name" value="PRK00099.1-1"/>
    <property type="match status" value="1"/>
</dbReference>
<dbReference type="PANTHER" id="PTHR11560">
    <property type="entry name" value="39S RIBOSOMAL PROTEIN L10, MITOCHONDRIAL"/>
    <property type="match status" value="1"/>
</dbReference>
<dbReference type="Pfam" id="PF00466">
    <property type="entry name" value="Ribosomal_L10"/>
    <property type="match status" value="1"/>
</dbReference>
<dbReference type="SUPFAM" id="SSF160369">
    <property type="entry name" value="Ribosomal protein L10-like"/>
    <property type="match status" value="1"/>
</dbReference>
<dbReference type="PROSITE" id="PS01109">
    <property type="entry name" value="RIBOSOMAL_L10"/>
    <property type="match status" value="1"/>
</dbReference>
<keyword id="KW-1185">Reference proteome</keyword>
<keyword id="KW-0687">Ribonucleoprotein</keyword>
<keyword id="KW-0689">Ribosomal protein</keyword>
<keyword id="KW-0694">RNA-binding</keyword>
<keyword id="KW-0699">rRNA-binding</keyword>
<name>RL10_LEIXX</name>
<gene>
    <name evidence="1" type="primary">rplJ</name>
    <name type="ordered locus">Lxx03150</name>
</gene>
<evidence type="ECO:0000255" key="1">
    <source>
        <dbReference type="HAMAP-Rule" id="MF_00362"/>
    </source>
</evidence>
<evidence type="ECO:0000305" key="2"/>
<proteinExistence type="inferred from homology"/>
<accession>Q6AH11</accession>
<feature type="chain" id="PRO_0000154651" description="Large ribosomal subunit protein uL10">
    <location>
        <begin position="1"/>
        <end position="172"/>
    </location>
</feature>
<sequence>MANKEATVAELENLFDSSTAVLLTEYRGLTVAQLKTLRTSISEHATYAVVKNTLTKIAANKKGISSFDEELVGPSAIAFVHGDPVAVAKSLRDFAKANPLLVVKSGYFDGNPLTAEEVGKLADLESREVLLAKLAGAFKASLFGAAYLFNAPLSQAVRTVDALREKQESAAE</sequence>